<gene>
    <name evidence="1" type="primary">cmk</name>
    <name type="ordered locus">YG5714_1442</name>
</gene>
<name>KCY_SACI7</name>
<reference key="1">
    <citation type="journal article" date="2009" name="Proc. Natl. Acad. Sci. U.S.A.">
        <title>Biogeography of the Sulfolobus islandicus pan-genome.</title>
        <authorList>
            <person name="Reno M.L."/>
            <person name="Held N.L."/>
            <person name="Fields C.J."/>
            <person name="Burke P.V."/>
            <person name="Whitaker R.J."/>
        </authorList>
    </citation>
    <scope>NUCLEOTIDE SEQUENCE [LARGE SCALE GENOMIC DNA]</scope>
    <source>
        <strain>Y.G.57.14 / Yellowstone #1</strain>
    </source>
</reference>
<organism>
    <name type="scientific">Saccharolobus islandicus (strain Y.G.57.14 / Yellowstone #1)</name>
    <name type="common">Sulfolobus islandicus</name>
    <dbReference type="NCBI Taxonomy" id="439386"/>
    <lineage>
        <taxon>Archaea</taxon>
        <taxon>Thermoproteota</taxon>
        <taxon>Thermoprotei</taxon>
        <taxon>Sulfolobales</taxon>
        <taxon>Sulfolobaceae</taxon>
        <taxon>Saccharolobus</taxon>
    </lineage>
</organism>
<feature type="chain" id="PRO_1000204464" description="Cytidylate kinase">
    <location>
        <begin position="1"/>
        <end position="189"/>
    </location>
</feature>
<feature type="binding site" evidence="1">
    <location>
        <begin position="7"/>
        <end position="15"/>
    </location>
    <ligand>
        <name>ATP</name>
        <dbReference type="ChEBI" id="CHEBI:30616"/>
    </ligand>
</feature>
<evidence type="ECO:0000255" key="1">
    <source>
        <dbReference type="HAMAP-Rule" id="MF_00239"/>
    </source>
</evidence>
<comment type="catalytic activity">
    <reaction evidence="1">
        <text>CMP + ATP = CDP + ADP</text>
        <dbReference type="Rhea" id="RHEA:11600"/>
        <dbReference type="ChEBI" id="CHEBI:30616"/>
        <dbReference type="ChEBI" id="CHEBI:58069"/>
        <dbReference type="ChEBI" id="CHEBI:60377"/>
        <dbReference type="ChEBI" id="CHEBI:456216"/>
        <dbReference type="EC" id="2.7.4.25"/>
    </reaction>
</comment>
<comment type="catalytic activity">
    <reaction evidence="1">
        <text>dCMP + ATP = dCDP + ADP</text>
        <dbReference type="Rhea" id="RHEA:25094"/>
        <dbReference type="ChEBI" id="CHEBI:30616"/>
        <dbReference type="ChEBI" id="CHEBI:57566"/>
        <dbReference type="ChEBI" id="CHEBI:58593"/>
        <dbReference type="ChEBI" id="CHEBI:456216"/>
        <dbReference type="EC" id="2.7.4.25"/>
    </reaction>
</comment>
<comment type="subcellular location">
    <subcellularLocation>
        <location evidence="1">Cytoplasm</location>
    </subcellularLocation>
</comment>
<comment type="similarity">
    <text evidence="1">Belongs to the cytidylate kinase family. Type 2 subfamily.</text>
</comment>
<accession>C3NEH0</accession>
<dbReference type="EC" id="2.7.4.25" evidence="1"/>
<dbReference type="EMBL" id="CP001403">
    <property type="protein sequence ID" value="ACP45709.1"/>
    <property type="molecule type" value="Genomic_DNA"/>
</dbReference>
<dbReference type="RefSeq" id="WP_012716182.1">
    <property type="nucleotide sequence ID" value="NC_012622.1"/>
</dbReference>
<dbReference type="SMR" id="C3NEH0"/>
<dbReference type="GeneID" id="7806029"/>
<dbReference type="GeneID" id="7809793"/>
<dbReference type="KEGG" id="siy:YG5714_1442"/>
<dbReference type="HOGENOM" id="CLU_079959_1_0_2"/>
<dbReference type="Proteomes" id="UP000002308">
    <property type="component" value="Chromosome"/>
</dbReference>
<dbReference type="GO" id="GO:0005737">
    <property type="term" value="C:cytoplasm"/>
    <property type="evidence" value="ECO:0007669"/>
    <property type="project" value="UniProtKB-SubCell"/>
</dbReference>
<dbReference type="GO" id="GO:0005524">
    <property type="term" value="F:ATP binding"/>
    <property type="evidence" value="ECO:0007669"/>
    <property type="project" value="UniProtKB-UniRule"/>
</dbReference>
<dbReference type="GO" id="GO:0036430">
    <property type="term" value="F:CMP kinase activity"/>
    <property type="evidence" value="ECO:0007669"/>
    <property type="project" value="RHEA"/>
</dbReference>
<dbReference type="GO" id="GO:0036431">
    <property type="term" value="F:dCMP kinase activity"/>
    <property type="evidence" value="ECO:0007669"/>
    <property type="project" value="RHEA"/>
</dbReference>
<dbReference type="GO" id="GO:0006220">
    <property type="term" value="P:pyrimidine nucleotide metabolic process"/>
    <property type="evidence" value="ECO:0007669"/>
    <property type="project" value="UniProtKB-UniRule"/>
</dbReference>
<dbReference type="CDD" id="cd02020">
    <property type="entry name" value="CMPK"/>
    <property type="match status" value="1"/>
</dbReference>
<dbReference type="Gene3D" id="3.40.50.300">
    <property type="entry name" value="P-loop containing nucleotide triphosphate hydrolases"/>
    <property type="match status" value="1"/>
</dbReference>
<dbReference type="HAMAP" id="MF_00239">
    <property type="entry name" value="Cytidyl_kinase_type2"/>
    <property type="match status" value="1"/>
</dbReference>
<dbReference type="InterPro" id="IPR011892">
    <property type="entry name" value="Cyt_kin_arch"/>
</dbReference>
<dbReference type="InterPro" id="IPR011994">
    <property type="entry name" value="Cytidylate_kinase_dom"/>
</dbReference>
<dbReference type="InterPro" id="IPR027417">
    <property type="entry name" value="P-loop_NTPase"/>
</dbReference>
<dbReference type="NCBIfam" id="TIGR02173">
    <property type="entry name" value="cyt_kin_arch"/>
    <property type="match status" value="1"/>
</dbReference>
<dbReference type="Pfam" id="PF13189">
    <property type="entry name" value="Cytidylate_kin2"/>
    <property type="match status" value="1"/>
</dbReference>
<dbReference type="SUPFAM" id="SSF52540">
    <property type="entry name" value="P-loop containing nucleoside triphosphate hydrolases"/>
    <property type="match status" value="1"/>
</dbReference>
<proteinExistence type="inferred from homology"/>
<sequence length="189" mass="21730">MIIIISGPPGSGKTSVAIKLANELSYKFISAGKIFRDIAQKMGLDIINLNKVAESNFDIDKMVDKKIFEFILSEKNLIIESHIAGWLFREYTNIAIYLWAPLKIRANRIAIRDKISYDQAISQIIKREYMHYKRFNKFYGIDINDLSVFDLVINTSNVDVNNIVKLILTYLSLVSQNPQPLKEKDINDK</sequence>
<keyword id="KW-0067">ATP-binding</keyword>
<keyword id="KW-0963">Cytoplasm</keyword>
<keyword id="KW-0418">Kinase</keyword>
<keyword id="KW-0547">Nucleotide-binding</keyword>
<keyword id="KW-0808">Transferase</keyword>
<protein>
    <recommendedName>
        <fullName evidence="1">Cytidylate kinase</fullName>
        <shortName evidence="1">CK</shortName>
        <ecNumber evidence="1">2.7.4.25</ecNumber>
    </recommendedName>
    <alternativeName>
        <fullName evidence="1">Cytidine monophosphate kinase</fullName>
        <shortName evidence="1">CMP kinase</shortName>
    </alternativeName>
</protein>